<proteinExistence type="inferred from homology"/>
<keyword id="KW-0687">Ribonucleoprotein</keyword>
<keyword id="KW-0689">Ribosomal protein</keyword>
<keyword id="KW-0694">RNA-binding</keyword>
<keyword id="KW-0699">rRNA-binding</keyword>
<dbReference type="EMBL" id="FM204884">
    <property type="protein sequence ID" value="CAW97661.1"/>
    <property type="molecule type" value="Genomic_DNA"/>
</dbReference>
<dbReference type="SMR" id="C0MCB9"/>
<dbReference type="KEGG" id="seq:SZO_00590"/>
<dbReference type="eggNOG" id="COG0186">
    <property type="taxonomic scope" value="Bacteria"/>
</dbReference>
<dbReference type="HOGENOM" id="CLU_073626_1_0_9"/>
<dbReference type="Proteomes" id="UP000001368">
    <property type="component" value="Chromosome"/>
</dbReference>
<dbReference type="GO" id="GO:0022627">
    <property type="term" value="C:cytosolic small ribosomal subunit"/>
    <property type="evidence" value="ECO:0007669"/>
    <property type="project" value="TreeGrafter"/>
</dbReference>
<dbReference type="GO" id="GO:0019843">
    <property type="term" value="F:rRNA binding"/>
    <property type="evidence" value="ECO:0007669"/>
    <property type="project" value="UniProtKB-UniRule"/>
</dbReference>
<dbReference type="GO" id="GO:0003735">
    <property type="term" value="F:structural constituent of ribosome"/>
    <property type="evidence" value="ECO:0007669"/>
    <property type="project" value="InterPro"/>
</dbReference>
<dbReference type="GO" id="GO:0006412">
    <property type="term" value="P:translation"/>
    <property type="evidence" value="ECO:0007669"/>
    <property type="project" value="UniProtKB-UniRule"/>
</dbReference>
<dbReference type="CDD" id="cd00364">
    <property type="entry name" value="Ribosomal_uS17"/>
    <property type="match status" value="1"/>
</dbReference>
<dbReference type="FunFam" id="2.40.50.140:FF:000026">
    <property type="entry name" value="30S ribosomal protein S17"/>
    <property type="match status" value="1"/>
</dbReference>
<dbReference type="Gene3D" id="2.40.50.140">
    <property type="entry name" value="Nucleic acid-binding proteins"/>
    <property type="match status" value="1"/>
</dbReference>
<dbReference type="HAMAP" id="MF_01345_B">
    <property type="entry name" value="Ribosomal_uS17_B"/>
    <property type="match status" value="1"/>
</dbReference>
<dbReference type="InterPro" id="IPR012340">
    <property type="entry name" value="NA-bd_OB-fold"/>
</dbReference>
<dbReference type="InterPro" id="IPR000266">
    <property type="entry name" value="Ribosomal_uS17"/>
</dbReference>
<dbReference type="InterPro" id="IPR019984">
    <property type="entry name" value="Ribosomal_uS17_bact/chlr"/>
</dbReference>
<dbReference type="InterPro" id="IPR019979">
    <property type="entry name" value="Ribosomal_uS17_CS"/>
</dbReference>
<dbReference type="NCBIfam" id="NF004123">
    <property type="entry name" value="PRK05610.1"/>
    <property type="match status" value="1"/>
</dbReference>
<dbReference type="NCBIfam" id="TIGR03635">
    <property type="entry name" value="uS17_bact"/>
    <property type="match status" value="1"/>
</dbReference>
<dbReference type="PANTHER" id="PTHR10744">
    <property type="entry name" value="40S RIBOSOMAL PROTEIN S11 FAMILY MEMBER"/>
    <property type="match status" value="1"/>
</dbReference>
<dbReference type="PANTHER" id="PTHR10744:SF1">
    <property type="entry name" value="SMALL RIBOSOMAL SUBUNIT PROTEIN US17M"/>
    <property type="match status" value="1"/>
</dbReference>
<dbReference type="Pfam" id="PF00366">
    <property type="entry name" value="Ribosomal_S17"/>
    <property type="match status" value="1"/>
</dbReference>
<dbReference type="PRINTS" id="PR00973">
    <property type="entry name" value="RIBOSOMALS17"/>
</dbReference>
<dbReference type="SUPFAM" id="SSF50249">
    <property type="entry name" value="Nucleic acid-binding proteins"/>
    <property type="match status" value="1"/>
</dbReference>
<dbReference type="PROSITE" id="PS00056">
    <property type="entry name" value="RIBOSOMAL_S17"/>
    <property type="match status" value="1"/>
</dbReference>
<name>RS17_STRS7</name>
<accession>C0MCB9</accession>
<feature type="chain" id="PRO_1000214799" description="Small ribosomal subunit protein uS17">
    <location>
        <begin position="1"/>
        <end position="86"/>
    </location>
</feature>
<organism>
    <name type="scientific">Streptococcus equi subsp. zooepidemicus (strain H70)</name>
    <dbReference type="NCBI Taxonomy" id="553483"/>
    <lineage>
        <taxon>Bacteria</taxon>
        <taxon>Bacillati</taxon>
        <taxon>Bacillota</taxon>
        <taxon>Bacilli</taxon>
        <taxon>Lactobacillales</taxon>
        <taxon>Streptococcaceae</taxon>
        <taxon>Streptococcus</taxon>
    </lineage>
</organism>
<evidence type="ECO:0000255" key="1">
    <source>
        <dbReference type="HAMAP-Rule" id="MF_01345"/>
    </source>
</evidence>
<evidence type="ECO:0000305" key="2"/>
<reference key="1">
    <citation type="journal article" date="2009" name="PLoS Pathog.">
        <title>Genomic evidence for the evolution of Streptococcus equi: host restriction, increased virulence, and genetic exchange with human pathogens.</title>
        <authorList>
            <person name="Holden M.T.G."/>
            <person name="Heather Z."/>
            <person name="Paillot R."/>
            <person name="Steward K.F."/>
            <person name="Webb K."/>
            <person name="Ainslie F."/>
            <person name="Jourdan T."/>
            <person name="Bason N.C."/>
            <person name="Holroyd N.E."/>
            <person name="Mungall K."/>
            <person name="Quail M.A."/>
            <person name="Sanders M."/>
            <person name="Simmonds M."/>
            <person name="Willey D."/>
            <person name="Brooks K."/>
            <person name="Aanensen D.M."/>
            <person name="Spratt B.G."/>
            <person name="Jolley K.A."/>
            <person name="Maiden M.C.J."/>
            <person name="Kehoe M."/>
            <person name="Chanter N."/>
            <person name="Bentley S.D."/>
            <person name="Robinson C."/>
            <person name="Maskell D.J."/>
            <person name="Parkhill J."/>
            <person name="Waller A.S."/>
        </authorList>
    </citation>
    <scope>NUCLEOTIDE SEQUENCE [LARGE SCALE GENOMIC DNA]</scope>
    <source>
        <strain>H70</strain>
    </source>
</reference>
<sequence>MERNQRKTLVGRVVSDKMDKTITVIVETKRNHPVYGKRINYSKKYKAHDEKNLAKEGDIVRIMETRPLSATKRFRLVEIVEEAVII</sequence>
<comment type="function">
    <text evidence="1">One of the primary rRNA binding proteins, it binds specifically to the 5'-end of 16S ribosomal RNA.</text>
</comment>
<comment type="subunit">
    <text evidence="1">Part of the 30S ribosomal subunit.</text>
</comment>
<comment type="similarity">
    <text evidence="1">Belongs to the universal ribosomal protein uS17 family.</text>
</comment>
<gene>
    <name evidence="1" type="primary">rpsQ</name>
    <name type="ordered locus">SZO_00590</name>
</gene>
<protein>
    <recommendedName>
        <fullName evidence="1">Small ribosomal subunit protein uS17</fullName>
    </recommendedName>
    <alternativeName>
        <fullName evidence="2">30S ribosomal protein S17</fullName>
    </alternativeName>
</protein>